<keyword id="KW-0997">Cell inner membrane</keyword>
<keyword id="KW-1003">Cell membrane</keyword>
<keyword id="KW-0472">Membrane</keyword>
<keyword id="KW-0808">Transferase</keyword>
<keyword id="KW-0812">Transmembrane</keyword>
<keyword id="KW-1133">Transmembrane helix</keyword>
<protein>
    <recommendedName>
        <fullName evidence="1">Phosphatidylglycerol--prolipoprotein diacylglyceryl transferase</fullName>
        <ecNumber evidence="1">2.5.1.145</ecNumber>
    </recommendedName>
</protein>
<evidence type="ECO:0000255" key="1">
    <source>
        <dbReference type="HAMAP-Rule" id="MF_01147"/>
    </source>
</evidence>
<organism>
    <name type="scientific">Solidesulfovibrio magneticus (strain ATCC 700980 / DSM 13731 / RS-1)</name>
    <name type="common">Desulfovibrio magneticus</name>
    <dbReference type="NCBI Taxonomy" id="573370"/>
    <lineage>
        <taxon>Bacteria</taxon>
        <taxon>Pseudomonadati</taxon>
        <taxon>Thermodesulfobacteriota</taxon>
        <taxon>Desulfovibrionia</taxon>
        <taxon>Desulfovibrionales</taxon>
        <taxon>Desulfovibrionaceae</taxon>
        <taxon>Solidesulfovibrio</taxon>
    </lineage>
</organism>
<accession>C4XU20</accession>
<feature type="chain" id="PRO_1000213652" description="Phosphatidylglycerol--prolipoprotein diacylglyceryl transferase">
    <location>
        <begin position="1"/>
        <end position="265"/>
    </location>
</feature>
<feature type="transmembrane region" description="Helical" evidence="1">
    <location>
        <begin position="17"/>
        <end position="37"/>
    </location>
</feature>
<feature type="transmembrane region" description="Helical" evidence="1">
    <location>
        <begin position="56"/>
        <end position="76"/>
    </location>
</feature>
<feature type="transmembrane region" description="Helical" evidence="1">
    <location>
        <begin position="92"/>
        <end position="112"/>
    </location>
</feature>
<feature type="transmembrane region" description="Helical" evidence="1">
    <location>
        <begin position="117"/>
        <end position="137"/>
    </location>
</feature>
<feature type="transmembrane region" description="Helical" evidence="1">
    <location>
        <begin position="173"/>
        <end position="193"/>
    </location>
</feature>
<feature type="transmembrane region" description="Helical" evidence="1">
    <location>
        <begin position="201"/>
        <end position="221"/>
    </location>
</feature>
<feature type="transmembrane region" description="Helical" evidence="1">
    <location>
        <begin position="235"/>
        <end position="255"/>
    </location>
</feature>
<feature type="binding site" evidence="1">
    <location>
        <position position="139"/>
    </location>
    <ligand>
        <name>a 1,2-diacyl-sn-glycero-3-phospho-(1'-sn-glycerol)</name>
        <dbReference type="ChEBI" id="CHEBI:64716"/>
    </ligand>
</feature>
<dbReference type="EC" id="2.5.1.145" evidence="1"/>
<dbReference type="EMBL" id="AP010904">
    <property type="protein sequence ID" value="BAH76042.1"/>
    <property type="molecule type" value="Genomic_DNA"/>
</dbReference>
<dbReference type="RefSeq" id="WP_015861220.1">
    <property type="nucleotide sequence ID" value="NC_012796.1"/>
</dbReference>
<dbReference type="SMR" id="C4XU20"/>
<dbReference type="STRING" id="573370.DMR_25510"/>
<dbReference type="KEGG" id="dma:DMR_25510"/>
<dbReference type="eggNOG" id="COG0682">
    <property type="taxonomic scope" value="Bacteria"/>
</dbReference>
<dbReference type="HOGENOM" id="CLU_013386_1_0_7"/>
<dbReference type="OrthoDB" id="871140at2"/>
<dbReference type="UniPathway" id="UPA00664"/>
<dbReference type="Proteomes" id="UP000009071">
    <property type="component" value="Chromosome"/>
</dbReference>
<dbReference type="GO" id="GO:0005886">
    <property type="term" value="C:plasma membrane"/>
    <property type="evidence" value="ECO:0007669"/>
    <property type="project" value="UniProtKB-SubCell"/>
</dbReference>
<dbReference type="GO" id="GO:0008961">
    <property type="term" value="F:phosphatidylglycerol-prolipoprotein diacylglyceryl transferase activity"/>
    <property type="evidence" value="ECO:0007669"/>
    <property type="project" value="UniProtKB-UniRule"/>
</dbReference>
<dbReference type="GO" id="GO:0042158">
    <property type="term" value="P:lipoprotein biosynthetic process"/>
    <property type="evidence" value="ECO:0007669"/>
    <property type="project" value="UniProtKB-UniRule"/>
</dbReference>
<dbReference type="HAMAP" id="MF_01147">
    <property type="entry name" value="Lgt"/>
    <property type="match status" value="1"/>
</dbReference>
<dbReference type="InterPro" id="IPR001640">
    <property type="entry name" value="Lgt"/>
</dbReference>
<dbReference type="NCBIfam" id="TIGR00544">
    <property type="entry name" value="lgt"/>
    <property type="match status" value="1"/>
</dbReference>
<dbReference type="PANTHER" id="PTHR30589:SF0">
    <property type="entry name" value="PHOSPHATIDYLGLYCEROL--PROLIPOPROTEIN DIACYLGLYCERYL TRANSFERASE"/>
    <property type="match status" value="1"/>
</dbReference>
<dbReference type="PANTHER" id="PTHR30589">
    <property type="entry name" value="PROLIPOPROTEIN DIACYLGLYCERYL TRANSFERASE"/>
    <property type="match status" value="1"/>
</dbReference>
<dbReference type="Pfam" id="PF01790">
    <property type="entry name" value="LGT"/>
    <property type="match status" value="1"/>
</dbReference>
<dbReference type="PROSITE" id="PS01311">
    <property type="entry name" value="LGT"/>
    <property type="match status" value="1"/>
</dbReference>
<sequence>MFVHPQFDPVAVSLGPLSIRWYGLMYLIGFAAAWLLGRYRASRPGSGWTPLQVDDLVTYMVLGVVVGGRLGYMLFYDLPAFLANPLSLVQVWQGGMSFHGGFLGVLAVVWFFGRKTGKGFWGVADFTAPLAPFGLFAGRIGNFINGELWGKATDLPWGVVFPDPRAGGVPRHPSQLYEALLEGAALFLIVWLYSSKKRQSGAVSGVFCVCYGLFRFAVELVRLPDPQLGYLAFGWLTMGQLLSLPVIVFGLWLLARRAPDQNASQ</sequence>
<comment type="function">
    <text evidence="1">Catalyzes the transfer of the diacylglyceryl group from phosphatidylglycerol to the sulfhydryl group of the N-terminal cysteine of a prolipoprotein, the first step in the formation of mature lipoproteins.</text>
</comment>
<comment type="catalytic activity">
    <reaction evidence="1">
        <text>L-cysteinyl-[prolipoprotein] + a 1,2-diacyl-sn-glycero-3-phospho-(1'-sn-glycerol) = an S-1,2-diacyl-sn-glyceryl-L-cysteinyl-[prolipoprotein] + sn-glycerol 1-phosphate + H(+)</text>
        <dbReference type="Rhea" id="RHEA:56712"/>
        <dbReference type="Rhea" id="RHEA-COMP:14679"/>
        <dbReference type="Rhea" id="RHEA-COMP:14680"/>
        <dbReference type="ChEBI" id="CHEBI:15378"/>
        <dbReference type="ChEBI" id="CHEBI:29950"/>
        <dbReference type="ChEBI" id="CHEBI:57685"/>
        <dbReference type="ChEBI" id="CHEBI:64716"/>
        <dbReference type="ChEBI" id="CHEBI:140658"/>
        <dbReference type="EC" id="2.5.1.145"/>
    </reaction>
</comment>
<comment type="pathway">
    <text evidence="1">Protein modification; lipoprotein biosynthesis (diacylglyceryl transfer).</text>
</comment>
<comment type="subcellular location">
    <subcellularLocation>
        <location evidence="1">Cell inner membrane</location>
        <topology evidence="1">Multi-pass membrane protein</topology>
    </subcellularLocation>
</comment>
<comment type="similarity">
    <text evidence="1">Belongs to the Lgt family.</text>
</comment>
<gene>
    <name evidence="1" type="primary">lgt</name>
    <name type="ordered locus">DMR_25510</name>
</gene>
<name>LGT_SOLM1</name>
<proteinExistence type="inferred from homology"/>
<reference key="1">
    <citation type="journal article" date="2009" name="Genome Res.">
        <title>Whole genome sequence of Desulfovibrio magneticus strain RS-1 revealed common gene clusters in magnetotactic bacteria.</title>
        <authorList>
            <person name="Nakazawa H."/>
            <person name="Arakaki A."/>
            <person name="Narita-Yamada S."/>
            <person name="Yashiro I."/>
            <person name="Jinno K."/>
            <person name="Aoki N."/>
            <person name="Tsuruyama A."/>
            <person name="Okamura Y."/>
            <person name="Tanikawa S."/>
            <person name="Fujita N."/>
            <person name="Takeyama H."/>
            <person name="Matsunaga T."/>
        </authorList>
    </citation>
    <scope>NUCLEOTIDE SEQUENCE [LARGE SCALE GENOMIC DNA]</scope>
    <source>
        <strain>ATCC 700980 / DSM 13731 / RS-1</strain>
    </source>
</reference>